<protein>
    <recommendedName>
        <fullName evidence="1">Large ribosomal subunit protein uL2</fullName>
    </recommendedName>
    <alternativeName>
        <fullName evidence="3">50S ribosomal protein L2</fullName>
    </alternativeName>
</protein>
<keyword id="KW-0687">Ribonucleoprotein</keyword>
<keyword id="KW-0689">Ribosomal protein</keyword>
<keyword id="KW-0694">RNA-binding</keyword>
<keyword id="KW-0699">rRNA-binding</keyword>
<gene>
    <name evidence="1" type="primary">rplB</name>
    <name type="ordered locus">gbs0061</name>
</gene>
<feature type="chain" id="PRO_0000129627" description="Large ribosomal subunit protein uL2">
    <location>
        <begin position="1"/>
        <end position="277"/>
    </location>
</feature>
<feature type="region of interest" description="Disordered" evidence="2">
    <location>
        <begin position="222"/>
        <end position="277"/>
    </location>
</feature>
<reference key="1">
    <citation type="journal article" date="2002" name="Mol. Microbiol.">
        <title>Genome sequence of Streptococcus agalactiae, a pathogen causing invasive neonatal disease.</title>
        <authorList>
            <person name="Glaser P."/>
            <person name="Rusniok C."/>
            <person name="Buchrieser C."/>
            <person name="Chevalier F."/>
            <person name="Frangeul L."/>
            <person name="Msadek T."/>
            <person name="Zouine M."/>
            <person name="Couve E."/>
            <person name="Lalioui L."/>
            <person name="Poyart C."/>
            <person name="Trieu-Cuot P."/>
            <person name="Kunst F."/>
        </authorList>
    </citation>
    <scope>NUCLEOTIDE SEQUENCE [LARGE SCALE GENOMIC DNA]</scope>
    <source>
        <strain>NEM316</strain>
    </source>
</reference>
<evidence type="ECO:0000255" key="1">
    <source>
        <dbReference type="HAMAP-Rule" id="MF_01320"/>
    </source>
</evidence>
<evidence type="ECO:0000256" key="2">
    <source>
        <dbReference type="SAM" id="MobiDB-lite"/>
    </source>
</evidence>
<evidence type="ECO:0000305" key="3"/>
<name>RL2_STRA3</name>
<proteinExistence type="inferred from homology"/>
<comment type="function">
    <text evidence="1">One of the primary rRNA binding proteins. Required for association of the 30S and 50S subunits to form the 70S ribosome, for tRNA binding and peptide bond formation. It has been suggested to have peptidyltransferase activity; this is somewhat controversial. Makes several contacts with the 16S rRNA in the 70S ribosome.</text>
</comment>
<comment type="subunit">
    <text evidence="1">Part of the 50S ribosomal subunit. Forms a bridge to the 30S subunit in the 70S ribosome.</text>
</comment>
<comment type="similarity">
    <text evidence="1">Belongs to the universal ribosomal protein uL2 family.</text>
</comment>
<organism>
    <name type="scientific">Streptococcus agalactiae serotype III (strain NEM316)</name>
    <dbReference type="NCBI Taxonomy" id="211110"/>
    <lineage>
        <taxon>Bacteria</taxon>
        <taxon>Bacillati</taxon>
        <taxon>Bacillota</taxon>
        <taxon>Bacilli</taxon>
        <taxon>Lactobacillales</taxon>
        <taxon>Streptococcaceae</taxon>
        <taxon>Streptococcus</taxon>
    </lineage>
</organism>
<dbReference type="EMBL" id="AL766843">
    <property type="protein sequence ID" value="CAD45706.1"/>
    <property type="molecule type" value="Genomic_DNA"/>
</dbReference>
<dbReference type="RefSeq" id="WP_000511737.1">
    <property type="nucleotide sequence ID" value="NC_004368.1"/>
</dbReference>
<dbReference type="SMR" id="Q8E7T5"/>
<dbReference type="KEGG" id="san:rplB"/>
<dbReference type="eggNOG" id="COG0090">
    <property type="taxonomic scope" value="Bacteria"/>
</dbReference>
<dbReference type="HOGENOM" id="CLU_036235_2_1_9"/>
<dbReference type="Proteomes" id="UP000000823">
    <property type="component" value="Chromosome"/>
</dbReference>
<dbReference type="GO" id="GO:0015934">
    <property type="term" value="C:large ribosomal subunit"/>
    <property type="evidence" value="ECO:0007669"/>
    <property type="project" value="InterPro"/>
</dbReference>
<dbReference type="GO" id="GO:0019843">
    <property type="term" value="F:rRNA binding"/>
    <property type="evidence" value="ECO:0007669"/>
    <property type="project" value="UniProtKB-UniRule"/>
</dbReference>
<dbReference type="GO" id="GO:0003735">
    <property type="term" value="F:structural constituent of ribosome"/>
    <property type="evidence" value="ECO:0007669"/>
    <property type="project" value="InterPro"/>
</dbReference>
<dbReference type="GO" id="GO:0016740">
    <property type="term" value="F:transferase activity"/>
    <property type="evidence" value="ECO:0007669"/>
    <property type="project" value="InterPro"/>
</dbReference>
<dbReference type="GO" id="GO:0002181">
    <property type="term" value="P:cytoplasmic translation"/>
    <property type="evidence" value="ECO:0007669"/>
    <property type="project" value="TreeGrafter"/>
</dbReference>
<dbReference type="FunFam" id="2.30.30.30:FF:000001">
    <property type="entry name" value="50S ribosomal protein L2"/>
    <property type="match status" value="1"/>
</dbReference>
<dbReference type="FunFam" id="2.40.50.140:FF:000003">
    <property type="entry name" value="50S ribosomal protein L2"/>
    <property type="match status" value="1"/>
</dbReference>
<dbReference type="FunFam" id="4.10.950.10:FF:000001">
    <property type="entry name" value="50S ribosomal protein L2"/>
    <property type="match status" value="1"/>
</dbReference>
<dbReference type="Gene3D" id="2.30.30.30">
    <property type="match status" value="1"/>
</dbReference>
<dbReference type="Gene3D" id="2.40.50.140">
    <property type="entry name" value="Nucleic acid-binding proteins"/>
    <property type="match status" value="1"/>
</dbReference>
<dbReference type="Gene3D" id="4.10.950.10">
    <property type="entry name" value="Ribosomal protein L2, domain 3"/>
    <property type="match status" value="1"/>
</dbReference>
<dbReference type="HAMAP" id="MF_01320_B">
    <property type="entry name" value="Ribosomal_uL2_B"/>
    <property type="match status" value="1"/>
</dbReference>
<dbReference type="InterPro" id="IPR012340">
    <property type="entry name" value="NA-bd_OB-fold"/>
</dbReference>
<dbReference type="InterPro" id="IPR014722">
    <property type="entry name" value="Rib_uL2_dom2"/>
</dbReference>
<dbReference type="InterPro" id="IPR002171">
    <property type="entry name" value="Ribosomal_uL2"/>
</dbReference>
<dbReference type="InterPro" id="IPR005880">
    <property type="entry name" value="Ribosomal_uL2_bac/org-type"/>
</dbReference>
<dbReference type="InterPro" id="IPR022669">
    <property type="entry name" value="Ribosomal_uL2_C"/>
</dbReference>
<dbReference type="InterPro" id="IPR022671">
    <property type="entry name" value="Ribosomal_uL2_CS"/>
</dbReference>
<dbReference type="InterPro" id="IPR014726">
    <property type="entry name" value="Ribosomal_uL2_dom3"/>
</dbReference>
<dbReference type="InterPro" id="IPR022666">
    <property type="entry name" value="Ribosomal_uL2_RNA-bd_dom"/>
</dbReference>
<dbReference type="InterPro" id="IPR008991">
    <property type="entry name" value="Translation_prot_SH3-like_sf"/>
</dbReference>
<dbReference type="NCBIfam" id="TIGR01171">
    <property type="entry name" value="rplB_bact"/>
    <property type="match status" value="1"/>
</dbReference>
<dbReference type="PANTHER" id="PTHR13691:SF5">
    <property type="entry name" value="LARGE RIBOSOMAL SUBUNIT PROTEIN UL2M"/>
    <property type="match status" value="1"/>
</dbReference>
<dbReference type="PANTHER" id="PTHR13691">
    <property type="entry name" value="RIBOSOMAL PROTEIN L2"/>
    <property type="match status" value="1"/>
</dbReference>
<dbReference type="Pfam" id="PF00181">
    <property type="entry name" value="Ribosomal_L2"/>
    <property type="match status" value="1"/>
</dbReference>
<dbReference type="Pfam" id="PF03947">
    <property type="entry name" value="Ribosomal_L2_C"/>
    <property type="match status" value="1"/>
</dbReference>
<dbReference type="PIRSF" id="PIRSF002158">
    <property type="entry name" value="Ribosomal_L2"/>
    <property type="match status" value="1"/>
</dbReference>
<dbReference type="SMART" id="SM01383">
    <property type="entry name" value="Ribosomal_L2"/>
    <property type="match status" value="1"/>
</dbReference>
<dbReference type="SMART" id="SM01382">
    <property type="entry name" value="Ribosomal_L2_C"/>
    <property type="match status" value="1"/>
</dbReference>
<dbReference type="SUPFAM" id="SSF50249">
    <property type="entry name" value="Nucleic acid-binding proteins"/>
    <property type="match status" value="1"/>
</dbReference>
<dbReference type="SUPFAM" id="SSF50104">
    <property type="entry name" value="Translation proteins SH3-like domain"/>
    <property type="match status" value="1"/>
</dbReference>
<dbReference type="PROSITE" id="PS00467">
    <property type="entry name" value="RIBOSOMAL_L2"/>
    <property type="match status" value="1"/>
</dbReference>
<sequence>MGIKVYKPTTNGRRNMTSLDFAEITTNTPEKSLLVSLKNKAGRNNNGRITVRHQGGGHKRHYRLIDFKRNKDGVEAVVKTIEYDPNRTANIALVHYTDGVKAYILAPKGLEVGQRIISGPEADIKVGNALPLANIPVGTVIHNIELQPGKGAELIRAAGASAQVLGQEGKYVLVRLQSGEVRMILGTCRATIGTVGNEQQSLVNIGKAGRNRWKGVRPTVRGSVMNPNDHPHGGGEGKAPVGRKAPSTPWGKPALGLKTRNKKAKSDKLIVRRRNQK</sequence>
<accession>Q8E7T5</accession>